<feature type="signal peptide" evidence="2">
    <location>
        <begin position="1"/>
        <end position="29"/>
    </location>
</feature>
<feature type="propeptide" id="PRO_0000026884" evidence="1">
    <location>
        <begin position="30"/>
        <end position="68"/>
    </location>
</feature>
<feature type="chain" id="PRO_0000026885" description="Glutamyl endopeptidase">
    <location>
        <begin position="69"/>
        <end position="336"/>
    </location>
</feature>
<feature type="repeat" description="1">
    <location>
        <begin position="289"/>
        <end position="291"/>
    </location>
</feature>
<feature type="repeat" description="2">
    <location>
        <begin position="292"/>
        <end position="294"/>
    </location>
</feature>
<feature type="repeat" description="3">
    <location>
        <begin position="295"/>
        <end position="297"/>
    </location>
</feature>
<feature type="repeat" description="4">
    <location>
        <begin position="298"/>
        <end position="300"/>
    </location>
</feature>
<feature type="repeat" description="5">
    <location>
        <begin position="301"/>
        <end position="303"/>
    </location>
</feature>
<feature type="repeat" description="6">
    <location>
        <begin position="304"/>
        <end position="306"/>
    </location>
</feature>
<feature type="repeat" description="7">
    <location>
        <begin position="310"/>
        <end position="312"/>
    </location>
</feature>
<feature type="repeat" description="8">
    <location>
        <begin position="313"/>
        <end position="315"/>
    </location>
</feature>
<feature type="repeat" description="9">
    <location>
        <begin position="316"/>
        <end position="318"/>
    </location>
</feature>
<feature type="repeat" description="10">
    <location>
        <begin position="319"/>
        <end position="321"/>
    </location>
</feature>
<feature type="repeat" description="11">
    <location>
        <begin position="322"/>
        <end position="324"/>
    </location>
</feature>
<feature type="region of interest" description="Disordered" evidence="4">
    <location>
        <begin position="34"/>
        <end position="61"/>
    </location>
</feature>
<feature type="region of interest" description="Disordered" evidence="4">
    <location>
        <begin position="283"/>
        <end position="336"/>
    </location>
</feature>
<feature type="region of interest" description="11 X 3 AA repeats of P-[DN]-N">
    <location>
        <begin position="289"/>
        <end position="324"/>
    </location>
</feature>
<feature type="compositionally biased region" description="Low complexity" evidence="4">
    <location>
        <begin position="39"/>
        <end position="51"/>
    </location>
</feature>
<feature type="compositionally biased region" description="Low complexity" evidence="4">
    <location>
        <begin position="286"/>
        <end position="336"/>
    </location>
</feature>
<feature type="active site" description="Charge relay system" evidence="3">
    <location>
        <position position="119"/>
    </location>
</feature>
<feature type="active site" description="Charge relay system" evidence="3">
    <location>
        <position position="161"/>
    </location>
</feature>
<feature type="active site" description="Charge relay system" evidence="3">
    <location>
        <position position="237"/>
    </location>
</feature>
<feature type="site" description="Cleavage; by aureolysin" evidence="1">
    <location>
        <begin position="68"/>
        <end position="69"/>
    </location>
</feature>
<keyword id="KW-0378">Hydrolase</keyword>
<keyword id="KW-0645">Protease</keyword>
<keyword id="KW-0677">Repeat</keyword>
<keyword id="KW-0964">Secreted</keyword>
<keyword id="KW-0720">Serine protease</keyword>
<keyword id="KW-0732">Signal</keyword>
<keyword id="KW-0843">Virulence</keyword>
<keyword id="KW-0865">Zymogen</keyword>
<comment type="function">
    <text evidence="1">Preferentially cleaves peptide bonds on the carboxyl-terminal side of aspartate and glutamate. Along with other extracellular proteases it is involved in colonization and infection of human tissues. Required for proteolytic maturation of thiol protease SspB and inactivation of SspC, an inhibitor of SspB. It is the most important protease for degradation of fibronectin-binding protein (FnBP) and surface protein A, which are involved in adherence to host cells. May also protect bacteria against host defense mechanism by cleaving the immunoglobulin classes IgG, IgA and IgM. May be involved in the stability of secreted lipases (By similarity).</text>
</comment>
<comment type="catalytic activity">
    <reaction evidence="3">
        <text>Preferential cleavage: Glu-|-Xaa, Asp-|-Xaa.</text>
        <dbReference type="EC" id="3.4.21.19"/>
    </reaction>
</comment>
<comment type="subcellular location">
    <subcellularLocation>
        <location evidence="1">Secreted</location>
    </subcellularLocation>
</comment>
<comment type="PTM">
    <text evidence="1">Proteolytically cleaved by aureolysin (aur). This cleavage leads to the activation of SspA (By similarity).</text>
</comment>
<comment type="miscellaneous">
    <text evidence="1">The cascade of activation of extracellular proteases proceeds from the metalloprotease aureolysin (aur), through SspA to SspB.</text>
</comment>
<comment type="similarity">
    <text evidence="5">Belongs to the peptidase S1B family.</text>
</comment>
<dbReference type="EC" id="3.4.21.19"/>
<dbReference type="EMBL" id="CP000046">
    <property type="protein sequence ID" value="AAW36522.1"/>
    <property type="molecule type" value="Genomic_DNA"/>
</dbReference>
<dbReference type="RefSeq" id="WP_000676549.1">
    <property type="nucleotide sequence ID" value="NC_002951.2"/>
</dbReference>
<dbReference type="SMR" id="Q5HH35"/>
<dbReference type="MEROPS" id="S01.269"/>
<dbReference type="KEGG" id="sac:SACOL1057"/>
<dbReference type="HOGENOM" id="CLU_073589_1_0_9"/>
<dbReference type="PRO" id="PR:Q5HH35"/>
<dbReference type="Proteomes" id="UP000000530">
    <property type="component" value="Chromosome"/>
</dbReference>
<dbReference type="GO" id="GO:0005576">
    <property type="term" value="C:extracellular region"/>
    <property type="evidence" value="ECO:0007669"/>
    <property type="project" value="UniProtKB-SubCell"/>
</dbReference>
<dbReference type="GO" id="GO:0004252">
    <property type="term" value="F:serine-type endopeptidase activity"/>
    <property type="evidence" value="ECO:0007669"/>
    <property type="project" value="InterPro"/>
</dbReference>
<dbReference type="GO" id="GO:0006508">
    <property type="term" value="P:proteolysis"/>
    <property type="evidence" value="ECO:0007669"/>
    <property type="project" value="UniProtKB-KW"/>
</dbReference>
<dbReference type="Gene3D" id="2.40.10.10">
    <property type="entry name" value="Trypsin-like serine proteases"/>
    <property type="match status" value="2"/>
</dbReference>
<dbReference type="InterPro" id="IPR050966">
    <property type="entry name" value="Glutamyl_endopeptidase"/>
</dbReference>
<dbReference type="InterPro" id="IPR009003">
    <property type="entry name" value="Peptidase_S1_PA"/>
</dbReference>
<dbReference type="InterPro" id="IPR043504">
    <property type="entry name" value="Peptidase_S1_PA_chymotrypsin"/>
</dbReference>
<dbReference type="InterPro" id="IPR008256">
    <property type="entry name" value="Peptidase_S1B"/>
</dbReference>
<dbReference type="InterPro" id="IPR008353">
    <property type="entry name" value="Peptidase_S1B_tx"/>
</dbReference>
<dbReference type="InterPro" id="IPR028301">
    <property type="entry name" value="V8_his_AS"/>
</dbReference>
<dbReference type="InterPro" id="IPR000126">
    <property type="entry name" value="V8_ser_AS"/>
</dbReference>
<dbReference type="PANTHER" id="PTHR15462">
    <property type="entry name" value="SERINE PROTEASE"/>
    <property type="match status" value="1"/>
</dbReference>
<dbReference type="PANTHER" id="PTHR15462:SF8">
    <property type="entry name" value="SERINE PROTEASE"/>
    <property type="match status" value="1"/>
</dbReference>
<dbReference type="Pfam" id="PF13365">
    <property type="entry name" value="Trypsin_2"/>
    <property type="match status" value="1"/>
</dbReference>
<dbReference type="PRINTS" id="PR01774">
    <property type="entry name" value="EXFOLTOXIN"/>
</dbReference>
<dbReference type="PRINTS" id="PR00839">
    <property type="entry name" value="V8PROTEASE"/>
</dbReference>
<dbReference type="SUPFAM" id="SSF50494">
    <property type="entry name" value="Trypsin-like serine proteases"/>
    <property type="match status" value="1"/>
</dbReference>
<dbReference type="PROSITE" id="PS00672">
    <property type="entry name" value="V8_HIS"/>
    <property type="match status" value="1"/>
</dbReference>
<dbReference type="PROSITE" id="PS00673">
    <property type="entry name" value="V8_SER"/>
    <property type="match status" value="1"/>
</dbReference>
<reference key="1">
    <citation type="journal article" date="2005" name="J. Bacteriol.">
        <title>Insights on evolution of virulence and resistance from the complete genome analysis of an early methicillin-resistant Staphylococcus aureus strain and a biofilm-producing methicillin-resistant Staphylococcus epidermidis strain.</title>
        <authorList>
            <person name="Gill S.R."/>
            <person name="Fouts D.E."/>
            <person name="Archer G.L."/>
            <person name="Mongodin E.F."/>
            <person name="DeBoy R.T."/>
            <person name="Ravel J."/>
            <person name="Paulsen I.T."/>
            <person name="Kolonay J.F."/>
            <person name="Brinkac L.M."/>
            <person name="Beanan M.J."/>
            <person name="Dodson R.J."/>
            <person name="Daugherty S.C."/>
            <person name="Madupu R."/>
            <person name="Angiuoli S.V."/>
            <person name="Durkin A.S."/>
            <person name="Haft D.H."/>
            <person name="Vamathevan J.J."/>
            <person name="Khouri H."/>
            <person name="Utterback T.R."/>
            <person name="Lee C."/>
            <person name="Dimitrov G."/>
            <person name="Jiang L."/>
            <person name="Qin H."/>
            <person name="Weidman J."/>
            <person name="Tran K."/>
            <person name="Kang K.H."/>
            <person name="Hance I.R."/>
            <person name="Nelson K.E."/>
            <person name="Fraser C.M."/>
        </authorList>
    </citation>
    <scope>NUCLEOTIDE SEQUENCE [LARGE SCALE GENOMIC DNA]</scope>
    <source>
        <strain>COL</strain>
    </source>
</reference>
<proteinExistence type="inferred from homology"/>
<name>SSPA_STAAC</name>
<sequence length="336" mass="36313">MKGKFLKVSSLFVATLTTATLVSSPAANALSSKAMDNHPQQTQSSKQQTPKIQKGGNLKPLEQREHANVILPNNDRHQITDTTNGHYAPVTYIQVEAPTGTFIASGVVVGKDTLLTNKHVVDATHGDPHALKAFPSAINQDNYPNGGFTAEQITKYSGEGDLAIVKFSPNEQNKHIGEVVKPATMSNNAETQVNQNITVTGYPGDKPVATMWESKGKITYLKGEAMQYDLSTTGGNSGSPVFNEKNEVIGIHWGGVPNEFNGAVFINENVRNFLKQNIEDIHFANDDQPNNPDNPDNPNNPDNPNNPDEPNNPDNPNNPDNPDNGDTNNSDNPDAA</sequence>
<accession>Q5HH35</accession>
<protein>
    <recommendedName>
        <fullName>Glutamyl endopeptidase</fullName>
        <ecNumber>3.4.21.19</ecNumber>
    </recommendedName>
    <alternativeName>
        <fullName>Endoproteinase Glu-C</fullName>
    </alternativeName>
    <alternativeName>
        <fullName>Staphylococcal serine proteinase</fullName>
    </alternativeName>
    <alternativeName>
        <fullName>V8 protease</fullName>
    </alternativeName>
    <alternativeName>
        <fullName>V8 proteinase</fullName>
    </alternativeName>
</protein>
<organism>
    <name type="scientific">Staphylococcus aureus (strain COL)</name>
    <dbReference type="NCBI Taxonomy" id="93062"/>
    <lineage>
        <taxon>Bacteria</taxon>
        <taxon>Bacillati</taxon>
        <taxon>Bacillota</taxon>
        <taxon>Bacilli</taxon>
        <taxon>Bacillales</taxon>
        <taxon>Staphylococcaceae</taxon>
        <taxon>Staphylococcus</taxon>
    </lineage>
</organism>
<evidence type="ECO:0000250" key="1"/>
<evidence type="ECO:0000255" key="2"/>
<evidence type="ECO:0000255" key="3">
    <source>
        <dbReference type="PROSITE-ProRule" id="PRU10083"/>
    </source>
</evidence>
<evidence type="ECO:0000256" key="4">
    <source>
        <dbReference type="SAM" id="MobiDB-lite"/>
    </source>
</evidence>
<evidence type="ECO:0000305" key="5"/>
<gene>
    <name type="primary">sspA</name>
    <name type="ordered locus">SACOL1057</name>
</gene>